<dbReference type="EC" id="2.8.1.7" evidence="1"/>
<dbReference type="EMBL" id="CP000436">
    <property type="protein sequence ID" value="ABI24559.1"/>
    <property type="molecule type" value="Genomic_DNA"/>
</dbReference>
<dbReference type="SMR" id="Q0I1L2"/>
<dbReference type="KEGG" id="hso:HS_0281"/>
<dbReference type="eggNOG" id="COG1104">
    <property type="taxonomic scope" value="Bacteria"/>
</dbReference>
<dbReference type="HOGENOM" id="CLU_003433_0_2_6"/>
<dbReference type="UniPathway" id="UPA00266"/>
<dbReference type="GO" id="GO:1990221">
    <property type="term" value="C:L-cysteine desulfurase complex"/>
    <property type="evidence" value="ECO:0007669"/>
    <property type="project" value="UniProtKB-ARBA"/>
</dbReference>
<dbReference type="GO" id="GO:0051537">
    <property type="term" value="F:2 iron, 2 sulfur cluster binding"/>
    <property type="evidence" value="ECO:0007669"/>
    <property type="project" value="UniProtKB-UniRule"/>
</dbReference>
<dbReference type="GO" id="GO:0031071">
    <property type="term" value="F:cysteine desulfurase activity"/>
    <property type="evidence" value="ECO:0007669"/>
    <property type="project" value="UniProtKB-UniRule"/>
</dbReference>
<dbReference type="GO" id="GO:0046872">
    <property type="term" value="F:metal ion binding"/>
    <property type="evidence" value="ECO:0007669"/>
    <property type="project" value="UniProtKB-KW"/>
</dbReference>
<dbReference type="GO" id="GO:0030170">
    <property type="term" value="F:pyridoxal phosphate binding"/>
    <property type="evidence" value="ECO:0007669"/>
    <property type="project" value="UniProtKB-UniRule"/>
</dbReference>
<dbReference type="GO" id="GO:0044571">
    <property type="term" value="P:[2Fe-2S] cluster assembly"/>
    <property type="evidence" value="ECO:0007669"/>
    <property type="project" value="UniProtKB-UniRule"/>
</dbReference>
<dbReference type="FunFam" id="3.40.640.10:FF:000003">
    <property type="entry name" value="Cysteine desulfurase IscS"/>
    <property type="match status" value="1"/>
</dbReference>
<dbReference type="FunFam" id="3.90.1150.10:FF:000002">
    <property type="entry name" value="Cysteine desulfurase IscS"/>
    <property type="match status" value="1"/>
</dbReference>
<dbReference type="Gene3D" id="3.90.1150.10">
    <property type="entry name" value="Aspartate Aminotransferase, domain 1"/>
    <property type="match status" value="1"/>
</dbReference>
<dbReference type="Gene3D" id="3.40.640.10">
    <property type="entry name" value="Type I PLP-dependent aspartate aminotransferase-like (Major domain)"/>
    <property type="match status" value="1"/>
</dbReference>
<dbReference type="HAMAP" id="MF_00331">
    <property type="entry name" value="Cys_desulf_IscS"/>
    <property type="match status" value="1"/>
</dbReference>
<dbReference type="InterPro" id="IPR000192">
    <property type="entry name" value="Aminotrans_V_dom"/>
</dbReference>
<dbReference type="InterPro" id="IPR020578">
    <property type="entry name" value="Aminotrans_V_PyrdxlP_BS"/>
</dbReference>
<dbReference type="InterPro" id="IPR010240">
    <property type="entry name" value="Cys_deSase_IscS"/>
</dbReference>
<dbReference type="InterPro" id="IPR016454">
    <property type="entry name" value="Cysteine_dSase"/>
</dbReference>
<dbReference type="InterPro" id="IPR015424">
    <property type="entry name" value="PyrdxlP-dep_Trfase"/>
</dbReference>
<dbReference type="InterPro" id="IPR015421">
    <property type="entry name" value="PyrdxlP-dep_Trfase_major"/>
</dbReference>
<dbReference type="InterPro" id="IPR015422">
    <property type="entry name" value="PyrdxlP-dep_Trfase_small"/>
</dbReference>
<dbReference type="NCBIfam" id="TIGR02006">
    <property type="entry name" value="IscS"/>
    <property type="match status" value="1"/>
</dbReference>
<dbReference type="NCBIfam" id="NF002806">
    <property type="entry name" value="PRK02948.1"/>
    <property type="match status" value="1"/>
</dbReference>
<dbReference type="NCBIfam" id="NF010611">
    <property type="entry name" value="PRK14012.1"/>
    <property type="match status" value="1"/>
</dbReference>
<dbReference type="PANTHER" id="PTHR11601:SF34">
    <property type="entry name" value="CYSTEINE DESULFURASE"/>
    <property type="match status" value="1"/>
</dbReference>
<dbReference type="PANTHER" id="PTHR11601">
    <property type="entry name" value="CYSTEINE DESULFURYLASE FAMILY MEMBER"/>
    <property type="match status" value="1"/>
</dbReference>
<dbReference type="Pfam" id="PF00266">
    <property type="entry name" value="Aminotran_5"/>
    <property type="match status" value="1"/>
</dbReference>
<dbReference type="PIRSF" id="PIRSF005572">
    <property type="entry name" value="NifS"/>
    <property type="match status" value="1"/>
</dbReference>
<dbReference type="SUPFAM" id="SSF53383">
    <property type="entry name" value="PLP-dependent transferases"/>
    <property type="match status" value="1"/>
</dbReference>
<dbReference type="PROSITE" id="PS00595">
    <property type="entry name" value="AA_TRANSFER_CLASS_5"/>
    <property type="match status" value="1"/>
</dbReference>
<sequence>MKLPIYLDYAATCPVDERVVKKMMEFLSIDGNFGNPASRSHKFGWQAEEAVDVARNHIADLIGADSREIVFTSGATEADNLALKGVMRFYQTKGKHLITCKTEHKAILDTCRQLEREGFEVTYLDPKSDGLIDLEELKSVIRDDTVLVSIMHANNEIGVVQDIAKIGEICRERKVLFHTDATQSVGKLPINLSELKVDLLSMSSHKLYGPKGIGALYVCRKPRVRLEAIIHGGGHERGMRSGTLPVHQIVGMGEAYRIAKEEMATEMPRLTALRDRLYNGLKDIEETYVNGSMEQRLGNNLNISFNYVEGESLMMALRDIAVSSGSACTSASLEPSYVLRALGLNDELAHSSIRFTVGRYTTAEEIDYAIGLVKSAVEKLRDLSPLWDMFKEGIDLNSIEWTHH</sequence>
<feature type="chain" id="PRO_1000019413" description="Cysteine desulfurase IscS">
    <location>
        <begin position="1"/>
        <end position="404"/>
    </location>
</feature>
<feature type="active site" description="Cysteine persulfide intermediate" evidence="1">
    <location>
        <position position="328"/>
    </location>
</feature>
<feature type="binding site" evidence="1">
    <location>
        <begin position="75"/>
        <end position="76"/>
    </location>
    <ligand>
        <name>pyridoxal 5'-phosphate</name>
        <dbReference type="ChEBI" id="CHEBI:597326"/>
    </ligand>
</feature>
<feature type="binding site" evidence="1">
    <location>
        <position position="155"/>
    </location>
    <ligand>
        <name>pyridoxal 5'-phosphate</name>
        <dbReference type="ChEBI" id="CHEBI:597326"/>
    </ligand>
</feature>
<feature type="binding site" evidence="1">
    <location>
        <position position="183"/>
    </location>
    <ligand>
        <name>pyridoxal 5'-phosphate</name>
        <dbReference type="ChEBI" id="CHEBI:597326"/>
    </ligand>
</feature>
<feature type="binding site" evidence="1">
    <location>
        <begin position="203"/>
        <end position="205"/>
    </location>
    <ligand>
        <name>pyridoxal 5'-phosphate</name>
        <dbReference type="ChEBI" id="CHEBI:597326"/>
    </ligand>
</feature>
<feature type="binding site" evidence="1">
    <location>
        <position position="243"/>
    </location>
    <ligand>
        <name>pyridoxal 5'-phosphate</name>
        <dbReference type="ChEBI" id="CHEBI:597326"/>
    </ligand>
</feature>
<feature type="binding site" description="via persulfide group" evidence="1">
    <location>
        <position position="328"/>
    </location>
    <ligand>
        <name>[2Fe-2S] cluster</name>
        <dbReference type="ChEBI" id="CHEBI:190135"/>
        <note>ligand shared with IscU</note>
    </ligand>
</feature>
<feature type="modified residue" description="N6-(pyridoxal phosphate)lysine" evidence="1">
    <location>
        <position position="206"/>
    </location>
</feature>
<proteinExistence type="inferred from homology"/>
<organism>
    <name type="scientific">Histophilus somni (strain 129Pt)</name>
    <name type="common">Haemophilus somnus</name>
    <dbReference type="NCBI Taxonomy" id="205914"/>
    <lineage>
        <taxon>Bacteria</taxon>
        <taxon>Pseudomonadati</taxon>
        <taxon>Pseudomonadota</taxon>
        <taxon>Gammaproteobacteria</taxon>
        <taxon>Pasteurellales</taxon>
        <taxon>Pasteurellaceae</taxon>
        <taxon>Histophilus</taxon>
    </lineage>
</organism>
<name>ISCS_HISS1</name>
<reference key="1">
    <citation type="journal article" date="2007" name="J. Bacteriol.">
        <title>Complete genome sequence of Haemophilus somnus (Histophilus somni) strain 129Pt and comparison to Haemophilus ducreyi 35000HP and Haemophilus influenzae Rd.</title>
        <authorList>
            <person name="Challacombe J.F."/>
            <person name="Duncan A.J."/>
            <person name="Brettin T.S."/>
            <person name="Bruce D."/>
            <person name="Chertkov O."/>
            <person name="Detter J.C."/>
            <person name="Han C.S."/>
            <person name="Misra M."/>
            <person name="Richardson P."/>
            <person name="Tapia R."/>
            <person name="Thayer N."/>
            <person name="Xie G."/>
            <person name="Inzana T.J."/>
        </authorList>
    </citation>
    <scope>NUCLEOTIDE SEQUENCE [LARGE SCALE GENOMIC DNA]</scope>
    <source>
        <strain>129Pt</strain>
    </source>
</reference>
<comment type="function">
    <text evidence="1">Master enzyme that delivers sulfur to a number of partners involved in Fe-S cluster assembly, tRNA modification or cofactor biosynthesis. Catalyzes the removal of elemental sulfur atoms from cysteine to produce alanine. Functions as a sulfur delivery protein for Fe-S cluster synthesis onto IscU, an Fe-S scaffold assembly protein, as well as other S acceptor proteins.</text>
</comment>
<comment type="catalytic activity">
    <reaction evidence="1">
        <text>(sulfur carrier)-H + L-cysteine = (sulfur carrier)-SH + L-alanine</text>
        <dbReference type="Rhea" id="RHEA:43892"/>
        <dbReference type="Rhea" id="RHEA-COMP:14737"/>
        <dbReference type="Rhea" id="RHEA-COMP:14739"/>
        <dbReference type="ChEBI" id="CHEBI:29917"/>
        <dbReference type="ChEBI" id="CHEBI:35235"/>
        <dbReference type="ChEBI" id="CHEBI:57972"/>
        <dbReference type="ChEBI" id="CHEBI:64428"/>
        <dbReference type="EC" id="2.8.1.7"/>
    </reaction>
</comment>
<comment type="cofactor">
    <cofactor evidence="1">
        <name>pyridoxal 5'-phosphate</name>
        <dbReference type="ChEBI" id="CHEBI:597326"/>
    </cofactor>
</comment>
<comment type="pathway">
    <text evidence="1">Cofactor biosynthesis; iron-sulfur cluster biosynthesis.</text>
</comment>
<comment type="subunit">
    <text evidence="1">Homodimer. Forms a heterotetramer with IscU, interacts with other sulfur acceptors.</text>
</comment>
<comment type="subcellular location">
    <subcellularLocation>
        <location evidence="1">Cytoplasm</location>
    </subcellularLocation>
</comment>
<comment type="similarity">
    <text evidence="1">Belongs to the class-V pyridoxal-phosphate-dependent aminotransferase family. NifS/IscS subfamily.</text>
</comment>
<evidence type="ECO:0000255" key="1">
    <source>
        <dbReference type="HAMAP-Rule" id="MF_00331"/>
    </source>
</evidence>
<keyword id="KW-0001">2Fe-2S</keyword>
<keyword id="KW-0963">Cytoplasm</keyword>
<keyword id="KW-0408">Iron</keyword>
<keyword id="KW-0411">Iron-sulfur</keyword>
<keyword id="KW-0479">Metal-binding</keyword>
<keyword id="KW-0663">Pyridoxal phosphate</keyword>
<keyword id="KW-0808">Transferase</keyword>
<gene>
    <name evidence="1" type="primary">iscS</name>
    <name type="ordered locus">HS_0281</name>
</gene>
<accession>Q0I1L2</accession>
<protein>
    <recommendedName>
        <fullName evidence="1">Cysteine desulfurase IscS</fullName>
        <ecNumber evidence="1">2.8.1.7</ecNumber>
    </recommendedName>
</protein>